<protein>
    <recommendedName>
        <fullName>Putative lipase ATG15</fullName>
        <ecNumber>3.1.1.3</ecNumber>
    </recommendedName>
    <alternativeName>
        <fullName>Autophagy-related protein 15</fullName>
    </alternativeName>
</protein>
<proteinExistence type="inferred from homology"/>
<comment type="function">
    <text evidence="1">Lipase which is essential for lysis of subvacuolar cytoplasm to vacuole targeted bodies and intravacuolar autophagic bodies. Involved in the lysis of intravacuolar multivesicular body (MVB) vesicles. The intravacuolar membrane disintegration by ATG15 is critical to life span extension (By similarity).</text>
</comment>
<comment type="catalytic activity">
    <reaction>
        <text>a triacylglycerol + H2O = a diacylglycerol + a fatty acid + H(+)</text>
        <dbReference type="Rhea" id="RHEA:12044"/>
        <dbReference type="ChEBI" id="CHEBI:15377"/>
        <dbReference type="ChEBI" id="CHEBI:15378"/>
        <dbReference type="ChEBI" id="CHEBI:17855"/>
        <dbReference type="ChEBI" id="CHEBI:18035"/>
        <dbReference type="ChEBI" id="CHEBI:28868"/>
        <dbReference type="EC" id="3.1.1.3"/>
    </reaction>
</comment>
<comment type="subunit">
    <text evidence="1">Binds to both phosphatidylinositol (PI) and phosphatidylinositol 3,5-bisphosphate (PIP2).</text>
</comment>
<comment type="subcellular location">
    <subcellularLocation>
        <location evidence="2">Endosome</location>
        <location evidence="2">Multivesicular body membrane</location>
        <topology evidence="2">Single-pass type II membrane protein</topology>
    </subcellularLocation>
    <subcellularLocation>
        <location evidence="2">Prevacuolar compartment membrane</location>
        <topology evidence="2">Single-pass type II membrane protein</topology>
    </subcellularLocation>
    <text evidence="2">From ER, targeted to vacuolar lumen at the MVB vesicles via the Golgi and the prevacuolar compartment (PVC).</text>
</comment>
<comment type="similarity">
    <text evidence="6">Belongs to the AB hydrolase superfamily. Lipase family.</text>
</comment>
<reference key="1">
    <citation type="journal article" date="2004" name="Nature">
        <title>Genome evolution in yeasts.</title>
        <authorList>
            <person name="Dujon B."/>
            <person name="Sherman D."/>
            <person name="Fischer G."/>
            <person name="Durrens P."/>
            <person name="Casaregola S."/>
            <person name="Lafontaine I."/>
            <person name="de Montigny J."/>
            <person name="Marck C."/>
            <person name="Neuveglise C."/>
            <person name="Talla E."/>
            <person name="Goffard N."/>
            <person name="Frangeul L."/>
            <person name="Aigle M."/>
            <person name="Anthouard V."/>
            <person name="Babour A."/>
            <person name="Barbe V."/>
            <person name="Barnay S."/>
            <person name="Blanchin S."/>
            <person name="Beckerich J.-M."/>
            <person name="Beyne E."/>
            <person name="Bleykasten C."/>
            <person name="Boisrame A."/>
            <person name="Boyer J."/>
            <person name="Cattolico L."/>
            <person name="Confanioleri F."/>
            <person name="de Daruvar A."/>
            <person name="Despons L."/>
            <person name="Fabre E."/>
            <person name="Fairhead C."/>
            <person name="Ferry-Dumazet H."/>
            <person name="Groppi A."/>
            <person name="Hantraye F."/>
            <person name="Hennequin C."/>
            <person name="Jauniaux N."/>
            <person name="Joyet P."/>
            <person name="Kachouri R."/>
            <person name="Kerrest A."/>
            <person name="Koszul R."/>
            <person name="Lemaire M."/>
            <person name="Lesur I."/>
            <person name="Ma L."/>
            <person name="Muller H."/>
            <person name="Nicaud J.-M."/>
            <person name="Nikolski M."/>
            <person name="Oztas S."/>
            <person name="Ozier-Kalogeropoulos O."/>
            <person name="Pellenz S."/>
            <person name="Potier S."/>
            <person name="Richard G.-F."/>
            <person name="Straub M.-L."/>
            <person name="Suleau A."/>
            <person name="Swennen D."/>
            <person name="Tekaia F."/>
            <person name="Wesolowski-Louvel M."/>
            <person name="Westhof E."/>
            <person name="Wirth B."/>
            <person name="Zeniou-Meyer M."/>
            <person name="Zivanovic Y."/>
            <person name="Bolotin-Fukuhara M."/>
            <person name="Thierry A."/>
            <person name="Bouchier C."/>
            <person name="Caudron B."/>
            <person name="Scarpelli C."/>
            <person name="Gaillardin C."/>
            <person name="Weissenbach J."/>
            <person name="Wincker P."/>
            <person name="Souciet J.-L."/>
        </authorList>
    </citation>
    <scope>NUCLEOTIDE SEQUENCE [LARGE SCALE GENOMIC DNA]</scope>
    <source>
        <strain>CLIB 122 / E 150</strain>
    </source>
</reference>
<evidence type="ECO:0000250" key="1"/>
<evidence type="ECO:0000250" key="2">
    <source>
        <dbReference type="UniProtKB" id="P25641"/>
    </source>
</evidence>
<evidence type="ECO:0000255" key="3"/>
<evidence type="ECO:0000255" key="4">
    <source>
        <dbReference type="PROSITE-ProRule" id="PRU10037"/>
    </source>
</evidence>
<evidence type="ECO:0000256" key="5">
    <source>
        <dbReference type="SAM" id="MobiDB-lite"/>
    </source>
</evidence>
<evidence type="ECO:0000305" key="6"/>
<gene>
    <name type="primary">ATG15</name>
    <name type="ordered locus">YALI0F06358g</name>
</gene>
<name>ATG15_YARLI</name>
<sequence length="549" mass="61062">MKQDLYKESSPPPSTTKSKGLYVIVAALVTTAIYLLYSQGYSNTHGEKDMPSVVPNLVLPANPSSDHSFAVKHIYHHNTEADANHGRMDVSGEWVRAAQKAQHLNLGQDTHRYMASNARDPYTNLPLKSRTQKVKRWRQRDPDHVESYLEAARLNPQLYGAMDFDWVEEDILVPDVTDRDTVVSLAVMASNAYVDVPFTGDWTNVSWKETGGIGWQSDGVRGHIFVDQTPGSPLVVIALKGTSAAIFDSGGDTVINDKTNDNLLFSCCCARVSYLWNTVCDCYTGESYTCDQECLEKELYAEDRYYRAVLDIYRNVTHLYPQKQIWVTGHSLGGALSAMLGRTYGIPAVGYEAPGELLPTKRLHLPSPPGIPWSQEHIWHFGHTADPIFMGVCNGASSSCSIGGYAMETSCHSGLQCMYDVVTDKGWHLSMVNHRIHTVIDEVLLAYNETAACVPPPPCQDCFNWNFVMGNDKDDDDKDKKKKKKTSTSSSVVSKTKTSTSSTVATNTMPSLPDPTCVERNWYGKCIRYDPEIKQQYGDSHTVTHVTMA</sequence>
<dbReference type="EC" id="3.1.1.3"/>
<dbReference type="EMBL" id="CR382132">
    <property type="protein sequence ID" value="CAG77882.2"/>
    <property type="molecule type" value="Genomic_DNA"/>
</dbReference>
<dbReference type="RefSeq" id="XP_505075.2">
    <property type="nucleotide sequence ID" value="XM_505075.2"/>
</dbReference>
<dbReference type="FunCoup" id="Q6C2N7">
    <property type="interactions" value="77"/>
</dbReference>
<dbReference type="STRING" id="284591.Q6C2N7"/>
<dbReference type="ESTHER" id="yarli-atg15">
    <property type="family name" value="ATG15-related-lipase"/>
</dbReference>
<dbReference type="GlyCosmos" id="Q6C2N7">
    <property type="glycosylation" value="3 sites, No reported glycans"/>
</dbReference>
<dbReference type="EnsemblFungi" id="CAG77882">
    <property type="protein sequence ID" value="CAG77882"/>
    <property type="gene ID" value="YALI0_F06358g"/>
</dbReference>
<dbReference type="KEGG" id="yli:2908407"/>
<dbReference type="VEuPathDB" id="FungiDB:YALI0_F06358g"/>
<dbReference type="HOGENOM" id="CLU_028295_0_2_1"/>
<dbReference type="InParanoid" id="Q6C2N7"/>
<dbReference type="OMA" id="TYHFGHT"/>
<dbReference type="OrthoDB" id="22842at4891"/>
<dbReference type="Proteomes" id="UP000001300">
    <property type="component" value="Chromosome F"/>
</dbReference>
<dbReference type="GO" id="GO:0016020">
    <property type="term" value="C:membrane"/>
    <property type="evidence" value="ECO:0000318"/>
    <property type="project" value="GO_Central"/>
</dbReference>
<dbReference type="GO" id="GO:0032585">
    <property type="term" value="C:multivesicular body membrane"/>
    <property type="evidence" value="ECO:0007669"/>
    <property type="project" value="UniProtKB-SubCell"/>
</dbReference>
<dbReference type="GO" id="GO:0005775">
    <property type="term" value="C:vacuolar lumen"/>
    <property type="evidence" value="ECO:0000318"/>
    <property type="project" value="GO_Central"/>
</dbReference>
<dbReference type="GO" id="GO:0004620">
    <property type="term" value="F:phospholipase activity"/>
    <property type="evidence" value="ECO:0000318"/>
    <property type="project" value="GO_Central"/>
</dbReference>
<dbReference type="GO" id="GO:0004806">
    <property type="term" value="F:triacylglycerol lipase activity"/>
    <property type="evidence" value="ECO:0007669"/>
    <property type="project" value="UniProtKB-EC"/>
</dbReference>
<dbReference type="GO" id="GO:0034496">
    <property type="term" value="P:multivesicular body membrane disassembly"/>
    <property type="evidence" value="ECO:0000318"/>
    <property type="project" value="GO_Central"/>
</dbReference>
<dbReference type="GO" id="GO:0046461">
    <property type="term" value="P:neutral lipid catabolic process"/>
    <property type="evidence" value="ECO:0000318"/>
    <property type="project" value="GO_Central"/>
</dbReference>
<dbReference type="GO" id="GO:0006660">
    <property type="term" value="P:phosphatidylserine catabolic process"/>
    <property type="evidence" value="ECO:0000318"/>
    <property type="project" value="GO_Central"/>
</dbReference>
<dbReference type="GO" id="GO:0034727">
    <property type="term" value="P:piecemeal microautophagy of the nucleus"/>
    <property type="evidence" value="ECO:0000318"/>
    <property type="project" value="GO_Central"/>
</dbReference>
<dbReference type="FunFam" id="3.40.50.1820:FF:000339">
    <property type="entry name" value="Lipase, putative"/>
    <property type="match status" value="1"/>
</dbReference>
<dbReference type="Gene3D" id="3.40.50.1820">
    <property type="entry name" value="alpha/beta hydrolase"/>
    <property type="match status" value="1"/>
</dbReference>
<dbReference type="InterPro" id="IPR029058">
    <property type="entry name" value="AB_hydrolase_fold"/>
</dbReference>
<dbReference type="InterPro" id="IPR050805">
    <property type="entry name" value="ATG15_Lipase"/>
</dbReference>
<dbReference type="InterPro" id="IPR002921">
    <property type="entry name" value="Fungal_lipase-type"/>
</dbReference>
<dbReference type="PANTHER" id="PTHR47175">
    <property type="entry name" value="LIPASE ATG15-RELATED"/>
    <property type="match status" value="1"/>
</dbReference>
<dbReference type="PANTHER" id="PTHR47175:SF2">
    <property type="entry name" value="LIPASE ATG15-RELATED"/>
    <property type="match status" value="1"/>
</dbReference>
<dbReference type="Pfam" id="PF01764">
    <property type="entry name" value="Lipase_3"/>
    <property type="match status" value="1"/>
</dbReference>
<dbReference type="SUPFAM" id="SSF53474">
    <property type="entry name" value="alpha/beta-Hydrolases"/>
    <property type="match status" value="1"/>
</dbReference>
<dbReference type="PROSITE" id="PS00120">
    <property type="entry name" value="LIPASE_SER"/>
    <property type="match status" value="1"/>
</dbReference>
<organism>
    <name type="scientific">Yarrowia lipolytica (strain CLIB 122 / E 150)</name>
    <name type="common">Yeast</name>
    <name type="synonym">Candida lipolytica</name>
    <dbReference type="NCBI Taxonomy" id="284591"/>
    <lineage>
        <taxon>Eukaryota</taxon>
        <taxon>Fungi</taxon>
        <taxon>Dikarya</taxon>
        <taxon>Ascomycota</taxon>
        <taxon>Saccharomycotina</taxon>
        <taxon>Dipodascomycetes</taxon>
        <taxon>Dipodascales</taxon>
        <taxon>Dipodascales incertae sedis</taxon>
        <taxon>Yarrowia</taxon>
    </lineage>
</organism>
<feature type="chain" id="PRO_0000090371" description="Putative lipase ATG15">
    <location>
        <begin position="1"/>
        <end position="549"/>
    </location>
</feature>
<feature type="topological domain" description="Cytoplasmic" evidence="3">
    <location>
        <begin position="1"/>
        <end position="19"/>
    </location>
</feature>
<feature type="transmembrane region" description="Helical; Signal-anchor for type II membrane protein" evidence="3">
    <location>
        <begin position="20"/>
        <end position="42"/>
    </location>
</feature>
<feature type="topological domain" description="Lumenal" evidence="3">
    <location>
        <begin position="43"/>
        <end position="549"/>
    </location>
</feature>
<feature type="region of interest" description="Disordered" evidence="5">
    <location>
        <begin position="474"/>
        <end position="510"/>
    </location>
</feature>
<feature type="compositionally biased region" description="Low complexity" evidence="5">
    <location>
        <begin position="487"/>
        <end position="504"/>
    </location>
</feature>
<feature type="active site" description="Charge relay system" evidence="4">
    <location>
        <position position="331"/>
    </location>
</feature>
<feature type="glycosylation site" description="N-linked (GlcNAc...) asparagine" evidence="3">
    <location>
        <position position="204"/>
    </location>
</feature>
<feature type="glycosylation site" description="N-linked (GlcNAc...) asparagine" evidence="3">
    <location>
        <position position="315"/>
    </location>
</feature>
<feature type="glycosylation site" description="N-linked (GlcNAc...) asparagine" evidence="3">
    <location>
        <position position="448"/>
    </location>
</feature>
<accession>Q6C2N7</accession>
<keyword id="KW-0072">Autophagy</keyword>
<keyword id="KW-0967">Endosome</keyword>
<keyword id="KW-0325">Glycoprotein</keyword>
<keyword id="KW-0378">Hydrolase</keyword>
<keyword id="KW-0442">Lipid degradation</keyword>
<keyword id="KW-0443">Lipid metabolism</keyword>
<keyword id="KW-0472">Membrane</keyword>
<keyword id="KW-1185">Reference proteome</keyword>
<keyword id="KW-0735">Signal-anchor</keyword>
<keyword id="KW-0812">Transmembrane</keyword>
<keyword id="KW-1133">Transmembrane helix</keyword>